<evidence type="ECO:0000255" key="1">
    <source>
        <dbReference type="PROSITE-ProRule" id="PRU01210"/>
    </source>
</evidence>
<evidence type="ECO:0000269" key="2">
    <source>
    </source>
</evidence>
<evidence type="ECO:0000303" key="3">
    <source>
    </source>
</evidence>
<evidence type="ECO:0000305" key="4"/>
<evidence type="ECO:0000305" key="5">
    <source>
    </source>
</evidence>
<keyword id="KW-0903">Direct protein sequencing</keyword>
<keyword id="KW-1015">Disulfide bond</keyword>
<keyword id="KW-0872">Ion channel impairing toxin</keyword>
<keyword id="KW-0528">Neurotoxin</keyword>
<keyword id="KW-0964">Secreted</keyword>
<keyword id="KW-0732">Signal</keyword>
<keyword id="KW-0800">Toxin</keyword>
<keyword id="KW-0738">Voltage-gated sodium channel impairing toxin</keyword>
<reference key="1">
    <citation type="journal article" date="2011" name="Toxicon">
        <title>Isolation and molecular cloning of beta-neurotoxins from the venom of the scorpion Centruroides suffusus suffusus.</title>
        <authorList>
            <person name="Espino-Solis G.P."/>
            <person name="Estrada G."/>
            <person name="Olamendi-Portugal T."/>
            <person name="Villegas E."/>
            <person name="Zamudio F."/>
            <person name="Cestele S."/>
            <person name="Possani L.D."/>
            <person name="Corzo G."/>
        </authorList>
    </citation>
    <scope>NUCLEOTIDE SEQUENCE [MRNA]</scope>
    <scope>PROTEIN SEQUENCE OF 18-49; 52-56 AND 59-75</scope>
    <scope>MASS SPECTROMETRY</scope>
    <scope>SUBCELLULAR LOCATION</scope>
    <scope>TOXIC DOSE</scope>
    <source>
        <tissue>Venom</tissue>
        <tissue>Venom gland</tissue>
    </source>
</reference>
<sequence length="82" mass="9388">MKLLMLIVALMIIGVQSKDGYPMDHKGCKISCVINNKYCETECVTVLKGKKGYCYFWKLACYCEGLPNWAKVWDRATNKCRA</sequence>
<comment type="function">
    <text evidence="2">Beta toxins bind voltage-independently at site-4 of sodium channels (Nav) and shift the voltage of activation toward more negative potentials thereby affecting sodium channel activation and promoting spontaneous and repetitive firing. This toxin compete with high affinity with 125I-Css4 bound on rat brain synaptosome and may bind with high affinity to Nav1.1/SCN1A, Nav1.2/SCN2A and Nav1.6/SCN8A.</text>
</comment>
<comment type="subcellular location">
    <subcellularLocation>
        <location evidence="2">Secreted</location>
    </subcellularLocation>
</comment>
<comment type="tissue specificity">
    <text evidence="5">Expressed by the venom gland.</text>
</comment>
<comment type="domain">
    <text evidence="4">Has the structural arrangement of an alpha-helix connected to antiparallel beta-sheets by disulfide bonds (CS-alpha/beta).</text>
</comment>
<comment type="mass spectrometry" mass="7524.9" method="Electrospray" evidence="2"/>
<comment type="toxic dose">
    <text evidence="2">LD(100) is 4 ug/kg by intracranial injection into mice.</text>
</comment>
<comment type="similarity">
    <text evidence="4">Belongs to the long (4 C-C) scorpion toxin superfamily. Sodium channel inhibitor family. Beta subfamily.</text>
</comment>
<proteinExistence type="evidence at protein level"/>
<feature type="signal peptide" evidence="2">
    <location>
        <begin position="1"/>
        <end position="17"/>
    </location>
</feature>
<feature type="chain" id="PRO_5003266311" description="Beta-neurotoxin Css9" evidence="5">
    <location>
        <begin position="18"/>
        <end position="82"/>
    </location>
</feature>
<feature type="domain" description="LCN-type CS-alpha/beta" evidence="1">
    <location>
        <begin position="18"/>
        <end position="81"/>
    </location>
</feature>
<feature type="disulfide bond" evidence="1">
    <location>
        <begin position="28"/>
        <end position="80"/>
    </location>
</feature>
<feature type="disulfide bond" evidence="1">
    <location>
        <begin position="32"/>
        <end position="54"/>
    </location>
</feature>
<feature type="disulfide bond" evidence="1">
    <location>
        <begin position="39"/>
        <end position="61"/>
    </location>
</feature>
<feature type="disulfide bond" evidence="1">
    <location>
        <begin position="43"/>
        <end position="63"/>
    </location>
</feature>
<dbReference type="EMBL" id="HQ262494">
    <property type="protein sequence ID" value="ADY17426.1"/>
    <property type="molecule type" value="mRNA"/>
</dbReference>
<dbReference type="SMR" id="F1CGT6"/>
<dbReference type="GO" id="GO:0005576">
    <property type="term" value="C:extracellular region"/>
    <property type="evidence" value="ECO:0007669"/>
    <property type="project" value="UniProtKB-SubCell"/>
</dbReference>
<dbReference type="GO" id="GO:0019871">
    <property type="term" value="F:sodium channel inhibitor activity"/>
    <property type="evidence" value="ECO:0007669"/>
    <property type="project" value="InterPro"/>
</dbReference>
<dbReference type="GO" id="GO:0090729">
    <property type="term" value="F:toxin activity"/>
    <property type="evidence" value="ECO:0007669"/>
    <property type="project" value="UniProtKB-KW"/>
</dbReference>
<dbReference type="GO" id="GO:0006952">
    <property type="term" value="P:defense response"/>
    <property type="evidence" value="ECO:0007669"/>
    <property type="project" value="InterPro"/>
</dbReference>
<dbReference type="CDD" id="cd23106">
    <property type="entry name" value="neurotoxins_LC_scorpion"/>
    <property type="match status" value="1"/>
</dbReference>
<dbReference type="FunFam" id="3.30.30.10:FF:000002">
    <property type="entry name" value="Alpha-like toxin BmK-M1"/>
    <property type="match status" value="1"/>
</dbReference>
<dbReference type="Gene3D" id="3.30.30.10">
    <property type="entry name" value="Knottin, scorpion toxin-like"/>
    <property type="match status" value="1"/>
</dbReference>
<dbReference type="InterPro" id="IPR044062">
    <property type="entry name" value="LCN-type_CS_alpha_beta_dom"/>
</dbReference>
<dbReference type="InterPro" id="IPR003614">
    <property type="entry name" value="Scorpion_toxin-like"/>
</dbReference>
<dbReference type="InterPro" id="IPR036574">
    <property type="entry name" value="Scorpion_toxin-like_sf"/>
</dbReference>
<dbReference type="InterPro" id="IPR018218">
    <property type="entry name" value="Scorpion_toxinL"/>
</dbReference>
<dbReference type="InterPro" id="IPR002061">
    <property type="entry name" value="Scorpion_toxinL/defensin"/>
</dbReference>
<dbReference type="Pfam" id="PF00537">
    <property type="entry name" value="Toxin_3"/>
    <property type="match status" value="1"/>
</dbReference>
<dbReference type="PRINTS" id="PR00285">
    <property type="entry name" value="SCORPNTOXIN"/>
</dbReference>
<dbReference type="SMART" id="SM00505">
    <property type="entry name" value="Knot1"/>
    <property type="match status" value="1"/>
</dbReference>
<dbReference type="SUPFAM" id="SSF57095">
    <property type="entry name" value="Scorpion toxin-like"/>
    <property type="match status" value="1"/>
</dbReference>
<dbReference type="PROSITE" id="PS51863">
    <property type="entry name" value="LCN_CSAB"/>
    <property type="match status" value="1"/>
</dbReference>
<name>SCX9_CENSU</name>
<accession>F1CGT6</accession>
<protein>
    <recommendedName>
        <fullName evidence="4">Beta-neurotoxin Css9</fullName>
    </recommendedName>
    <alternativeName>
        <fullName evidence="3">Beta-neurotoxin CssIX</fullName>
        <shortName evidence="4">Css IX</shortName>
    </alternativeName>
</protein>
<organism>
    <name type="scientific">Centruroides suffusus</name>
    <name type="common">Durango bark scorpion</name>
    <dbReference type="NCBI Taxonomy" id="6880"/>
    <lineage>
        <taxon>Eukaryota</taxon>
        <taxon>Metazoa</taxon>
        <taxon>Ecdysozoa</taxon>
        <taxon>Arthropoda</taxon>
        <taxon>Chelicerata</taxon>
        <taxon>Arachnida</taxon>
        <taxon>Scorpiones</taxon>
        <taxon>Buthida</taxon>
        <taxon>Buthoidea</taxon>
        <taxon>Buthidae</taxon>
        <taxon>Centruroides</taxon>
    </lineage>
</organism>